<name>RS10_BACC3</name>
<feature type="chain" id="PRO_1000196285" description="Small ribosomal subunit protein uS10">
    <location>
        <begin position="1"/>
        <end position="102"/>
    </location>
</feature>
<reference key="1">
    <citation type="submission" date="2009-02" db="EMBL/GenBank/DDBJ databases">
        <title>Genome sequence of Bacillus cereus 03BB102.</title>
        <authorList>
            <person name="Dodson R.J."/>
            <person name="Jackson P."/>
            <person name="Munk A.C."/>
            <person name="Brettin T."/>
            <person name="Bruce D."/>
            <person name="Detter C."/>
            <person name="Tapia R."/>
            <person name="Han C."/>
            <person name="Sutton G."/>
            <person name="Sims D."/>
        </authorList>
    </citation>
    <scope>NUCLEOTIDE SEQUENCE [LARGE SCALE GENOMIC DNA]</scope>
    <source>
        <strain>03BB102</strain>
    </source>
</reference>
<protein>
    <recommendedName>
        <fullName evidence="1">Small ribosomal subunit protein uS10</fullName>
    </recommendedName>
    <alternativeName>
        <fullName evidence="2">30S ribosomal protein S10</fullName>
    </alternativeName>
</protein>
<organism>
    <name type="scientific">Bacillus cereus (strain 03BB102)</name>
    <dbReference type="NCBI Taxonomy" id="572264"/>
    <lineage>
        <taxon>Bacteria</taxon>
        <taxon>Bacillati</taxon>
        <taxon>Bacillota</taxon>
        <taxon>Bacilli</taxon>
        <taxon>Bacillales</taxon>
        <taxon>Bacillaceae</taxon>
        <taxon>Bacillus</taxon>
        <taxon>Bacillus cereus group</taxon>
    </lineage>
</organism>
<comment type="function">
    <text evidence="1">Involved in the binding of tRNA to the ribosomes.</text>
</comment>
<comment type="subunit">
    <text evidence="1">Part of the 30S ribosomal subunit.</text>
</comment>
<comment type="similarity">
    <text evidence="1">Belongs to the universal ribosomal protein uS10 family.</text>
</comment>
<dbReference type="EMBL" id="CP001407">
    <property type="protein sequence ID" value="ACO27889.1"/>
    <property type="molecule type" value="Genomic_DNA"/>
</dbReference>
<dbReference type="RefSeq" id="WP_001040596.1">
    <property type="nucleotide sequence ID" value="NZ_CP009318.1"/>
</dbReference>
<dbReference type="SMR" id="C1ET38"/>
<dbReference type="GeneID" id="93010944"/>
<dbReference type="KEGG" id="bcx:BCA_0138"/>
<dbReference type="PATRIC" id="fig|572264.18.peg.173"/>
<dbReference type="Proteomes" id="UP000002210">
    <property type="component" value="Chromosome"/>
</dbReference>
<dbReference type="GO" id="GO:1990904">
    <property type="term" value="C:ribonucleoprotein complex"/>
    <property type="evidence" value="ECO:0007669"/>
    <property type="project" value="UniProtKB-KW"/>
</dbReference>
<dbReference type="GO" id="GO:0005840">
    <property type="term" value="C:ribosome"/>
    <property type="evidence" value="ECO:0007669"/>
    <property type="project" value="UniProtKB-KW"/>
</dbReference>
<dbReference type="GO" id="GO:0003735">
    <property type="term" value="F:structural constituent of ribosome"/>
    <property type="evidence" value="ECO:0007669"/>
    <property type="project" value="InterPro"/>
</dbReference>
<dbReference type="GO" id="GO:0000049">
    <property type="term" value="F:tRNA binding"/>
    <property type="evidence" value="ECO:0007669"/>
    <property type="project" value="UniProtKB-UniRule"/>
</dbReference>
<dbReference type="GO" id="GO:0006412">
    <property type="term" value="P:translation"/>
    <property type="evidence" value="ECO:0007669"/>
    <property type="project" value="UniProtKB-UniRule"/>
</dbReference>
<dbReference type="FunFam" id="3.30.70.600:FF:000001">
    <property type="entry name" value="30S ribosomal protein S10"/>
    <property type="match status" value="1"/>
</dbReference>
<dbReference type="Gene3D" id="3.30.70.600">
    <property type="entry name" value="Ribosomal protein S10 domain"/>
    <property type="match status" value="1"/>
</dbReference>
<dbReference type="HAMAP" id="MF_00508">
    <property type="entry name" value="Ribosomal_uS10"/>
    <property type="match status" value="1"/>
</dbReference>
<dbReference type="InterPro" id="IPR001848">
    <property type="entry name" value="Ribosomal_uS10"/>
</dbReference>
<dbReference type="InterPro" id="IPR018268">
    <property type="entry name" value="Ribosomal_uS10_CS"/>
</dbReference>
<dbReference type="InterPro" id="IPR027486">
    <property type="entry name" value="Ribosomal_uS10_dom"/>
</dbReference>
<dbReference type="InterPro" id="IPR036838">
    <property type="entry name" value="Ribosomal_uS10_dom_sf"/>
</dbReference>
<dbReference type="NCBIfam" id="NF001861">
    <property type="entry name" value="PRK00596.1"/>
    <property type="match status" value="1"/>
</dbReference>
<dbReference type="NCBIfam" id="TIGR01049">
    <property type="entry name" value="rpsJ_bact"/>
    <property type="match status" value="1"/>
</dbReference>
<dbReference type="PANTHER" id="PTHR11700">
    <property type="entry name" value="30S RIBOSOMAL PROTEIN S10 FAMILY MEMBER"/>
    <property type="match status" value="1"/>
</dbReference>
<dbReference type="Pfam" id="PF00338">
    <property type="entry name" value="Ribosomal_S10"/>
    <property type="match status" value="1"/>
</dbReference>
<dbReference type="PRINTS" id="PR00971">
    <property type="entry name" value="RIBOSOMALS10"/>
</dbReference>
<dbReference type="SMART" id="SM01403">
    <property type="entry name" value="Ribosomal_S10"/>
    <property type="match status" value="1"/>
</dbReference>
<dbReference type="SUPFAM" id="SSF54999">
    <property type="entry name" value="Ribosomal protein S10"/>
    <property type="match status" value="1"/>
</dbReference>
<dbReference type="PROSITE" id="PS00361">
    <property type="entry name" value="RIBOSOMAL_S10"/>
    <property type="match status" value="1"/>
</dbReference>
<sequence>MAKEKIRIRLKAYDHRILDQSAEKIVETAKRSGATVSGPIPLPTEKTVYTILRAVHKYKDSREQFEMRTHKRLIDIVSPTPQTVDSLMRLDLPSGVDIEIKL</sequence>
<gene>
    <name evidence="1" type="primary">rpsJ</name>
    <name type="ordered locus">BCA_0138</name>
</gene>
<keyword id="KW-0687">Ribonucleoprotein</keyword>
<keyword id="KW-0689">Ribosomal protein</keyword>
<accession>C1ET38</accession>
<evidence type="ECO:0000255" key="1">
    <source>
        <dbReference type="HAMAP-Rule" id="MF_00508"/>
    </source>
</evidence>
<evidence type="ECO:0000305" key="2"/>
<proteinExistence type="inferred from homology"/>